<keyword id="KW-0325">Glycoprotein</keyword>
<keyword id="KW-0378">Hydrolase</keyword>
<keyword id="KW-0442">Lipid degradation</keyword>
<keyword id="KW-0443">Lipid metabolism</keyword>
<keyword id="KW-1185">Reference proteome</keyword>
<keyword id="KW-0964">Secreted</keyword>
<keyword id="KW-0732">Signal</keyword>
<protein>
    <recommendedName>
        <fullName>GDSL esterase/lipase At5g18430</fullName>
        <ecNumber>3.1.1.-</ecNumber>
    </recommendedName>
    <alternativeName>
        <fullName>Extracellular lipase At5g18430</fullName>
    </alternativeName>
</protein>
<reference key="1">
    <citation type="journal article" date="2000" name="Nature">
        <title>Sequence and analysis of chromosome 5 of the plant Arabidopsis thaliana.</title>
        <authorList>
            <person name="Tabata S."/>
            <person name="Kaneko T."/>
            <person name="Nakamura Y."/>
            <person name="Kotani H."/>
            <person name="Kato T."/>
            <person name="Asamizu E."/>
            <person name="Miyajima N."/>
            <person name="Sasamoto S."/>
            <person name="Kimura T."/>
            <person name="Hosouchi T."/>
            <person name="Kawashima K."/>
            <person name="Kohara M."/>
            <person name="Matsumoto M."/>
            <person name="Matsuno A."/>
            <person name="Muraki A."/>
            <person name="Nakayama S."/>
            <person name="Nakazaki N."/>
            <person name="Naruo K."/>
            <person name="Okumura S."/>
            <person name="Shinpo S."/>
            <person name="Takeuchi C."/>
            <person name="Wada T."/>
            <person name="Watanabe A."/>
            <person name="Yamada M."/>
            <person name="Yasuda M."/>
            <person name="Sato S."/>
            <person name="de la Bastide M."/>
            <person name="Huang E."/>
            <person name="Spiegel L."/>
            <person name="Gnoj L."/>
            <person name="O'Shaughnessy A."/>
            <person name="Preston R."/>
            <person name="Habermann K."/>
            <person name="Murray J."/>
            <person name="Johnson D."/>
            <person name="Rohlfing T."/>
            <person name="Nelson J."/>
            <person name="Stoneking T."/>
            <person name="Pepin K."/>
            <person name="Spieth J."/>
            <person name="Sekhon M."/>
            <person name="Armstrong J."/>
            <person name="Becker M."/>
            <person name="Belter E."/>
            <person name="Cordum H."/>
            <person name="Cordes M."/>
            <person name="Courtney L."/>
            <person name="Courtney W."/>
            <person name="Dante M."/>
            <person name="Du H."/>
            <person name="Edwards J."/>
            <person name="Fryman J."/>
            <person name="Haakensen B."/>
            <person name="Lamar E."/>
            <person name="Latreille P."/>
            <person name="Leonard S."/>
            <person name="Meyer R."/>
            <person name="Mulvaney E."/>
            <person name="Ozersky P."/>
            <person name="Riley A."/>
            <person name="Strowmatt C."/>
            <person name="Wagner-McPherson C."/>
            <person name="Wollam A."/>
            <person name="Yoakum M."/>
            <person name="Bell M."/>
            <person name="Dedhia N."/>
            <person name="Parnell L."/>
            <person name="Shah R."/>
            <person name="Rodriguez M."/>
            <person name="Hoon See L."/>
            <person name="Vil D."/>
            <person name="Baker J."/>
            <person name="Kirchoff K."/>
            <person name="Toth K."/>
            <person name="King L."/>
            <person name="Bahret A."/>
            <person name="Miller B."/>
            <person name="Marra M.A."/>
            <person name="Martienssen R."/>
            <person name="McCombie W.R."/>
            <person name="Wilson R.K."/>
            <person name="Murphy G."/>
            <person name="Bancroft I."/>
            <person name="Volckaert G."/>
            <person name="Wambutt R."/>
            <person name="Duesterhoeft A."/>
            <person name="Stiekema W."/>
            <person name="Pohl T."/>
            <person name="Entian K.-D."/>
            <person name="Terryn N."/>
            <person name="Hartley N."/>
            <person name="Bent E."/>
            <person name="Johnson S."/>
            <person name="Langham S.-A."/>
            <person name="McCullagh B."/>
            <person name="Robben J."/>
            <person name="Grymonprez B."/>
            <person name="Zimmermann W."/>
            <person name="Ramsperger U."/>
            <person name="Wedler H."/>
            <person name="Balke K."/>
            <person name="Wedler E."/>
            <person name="Peters S."/>
            <person name="van Staveren M."/>
            <person name="Dirkse W."/>
            <person name="Mooijman P."/>
            <person name="Klein Lankhorst R."/>
            <person name="Weitzenegger T."/>
            <person name="Bothe G."/>
            <person name="Rose M."/>
            <person name="Hauf J."/>
            <person name="Berneiser S."/>
            <person name="Hempel S."/>
            <person name="Feldpausch M."/>
            <person name="Lamberth S."/>
            <person name="Villarroel R."/>
            <person name="Gielen J."/>
            <person name="Ardiles W."/>
            <person name="Bents O."/>
            <person name="Lemcke K."/>
            <person name="Kolesov G."/>
            <person name="Mayer K.F.X."/>
            <person name="Rudd S."/>
            <person name="Schoof H."/>
            <person name="Schueller C."/>
            <person name="Zaccaria P."/>
            <person name="Mewes H.-W."/>
            <person name="Bevan M."/>
            <person name="Fransz P.F."/>
        </authorList>
    </citation>
    <scope>NUCLEOTIDE SEQUENCE [LARGE SCALE GENOMIC DNA]</scope>
    <source>
        <strain>cv. Columbia</strain>
    </source>
</reference>
<reference key="2">
    <citation type="journal article" date="2017" name="Plant J.">
        <title>Araport11: a complete reannotation of the Arabidopsis thaliana reference genome.</title>
        <authorList>
            <person name="Cheng C.Y."/>
            <person name="Krishnakumar V."/>
            <person name="Chan A.P."/>
            <person name="Thibaud-Nissen F."/>
            <person name="Schobel S."/>
            <person name="Town C.D."/>
        </authorList>
    </citation>
    <scope>GENOME REANNOTATION</scope>
    <source>
        <strain>cv. Columbia</strain>
    </source>
</reference>
<reference key="3">
    <citation type="submission" date="2005-02" db="EMBL/GenBank/DDBJ databases">
        <title>Arabidopsis ORF clones.</title>
        <authorList>
            <person name="Kim C.J."/>
            <person name="Chen H."/>
            <person name="Cheuk R.F."/>
            <person name="Shinn P."/>
            <person name="Ecker J.R."/>
        </authorList>
    </citation>
    <scope>NUCLEOTIDE SEQUENCE [LARGE SCALE MRNA]</scope>
    <source>
        <strain>cv. Columbia</strain>
    </source>
</reference>
<reference key="4">
    <citation type="journal article" date="2004" name="Prog. Lipid Res.">
        <title>GDSL family of serine esterases/lipases.</title>
        <authorList>
            <person name="Akoh C.C."/>
            <person name="Lee G.-C."/>
            <person name="Liaw Y.-C."/>
            <person name="Huang T.-H."/>
            <person name="Shaw J.-F."/>
        </authorList>
    </citation>
    <scope>REVIEW</scope>
</reference>
<reference key="5">
    <citation type="journal article" date="2008" name="Pak. J. Biol. Sci.">
        <title>Sequence analysis of GDSL lipase gene family in Arabidopsis thaliana.</title>
        <authorList>
            <person name="Ling H."/>
        </authorList>
    </citation>
    <scope>GENE FAMILY</scope>
</reference>
<accession>Q5PNZ0</accession>
<gene>
    <name type="ordered locus">At5g18430</name>
    <name type="ORF">F20L16.150</name>
</gene>
<organism>
    <name type="scientific">Arabidopsis thaliana</name>
    <name type="common">Mouse-ear cress</name>
    <dbReference type="NCBI Taxonomy" id="3702"/>
    <lineage>
        <taxon>Eukaryota</taxon>
        <taxon>Viridiplantae</taxon>
        <taxon>Streptophyta</taxon>
        <taxon>Embryophyta</taxon>
        <taxon>Tracheophyta</taxon>
        <taxon>Spermatophyta</taxon>
        <taxon>Magnoliopsida</taxon>
        <taxon>eudicotyledons</taxon>
        <taxon>Gunneridae</taxon>
        <taxon>Pentapetalae</taxon>
        <taxon>rosids</taxon>
        <taxon>malvids</taxon>
        <taxon>Brassicales</taxon>
        <taxon>Brassicaceae</taxon>
        <taxon>Camelineae</taxon>
        <taxon>Arabidopsis</taxon>
    </lineage>
</organism>
<evidence type="ECO:0000250" key="1"/>
<evidence type="ECO:0000255" key="2"/>
<evidence type="ECO:0000305" key="3"/>
<proteinExistence type="evidence at transcript level"/>
<sequence length="362" mass="40123">MTISTVIAFMSMFLVFVMSGPIVVEGRAFFVFGDSLVDSGNNNYLVTTARADSPPYGIDFPTRRPTGRFSNGLNIPDLISEAIGNEEPPLPYLSPELRGRSLLNGANFASAGIGILNDTGFQFINIIRMYQQLDYFQQYQQRVSRLIGKPQTQRLVSQALVLITVGGNDFVNNYFLFPYSARSRQFTLPDYVRLLISEYKKILLRLNSLGVGRVLVTGAGPLGCAPAELARSGTSNGRCSAELQRAASLYDPQLLQMINELNKKIGRNVFIAANTNQMQEDFLSTPRRYGFVTSKVACCGQGPYNGMGLCTVLSNLCPNRELYVFWDAFHPTEKANRMIVRHILTGTTKYMNPMNLSSALAL</sequence>
<feature type="signal peptide" evidence="2">
    <location>
        <begin position="1"/>
        <end position="19"/>
    </location>
</feature>
<feature type="chain" id="PRO_0000367417" description="GDSL esterase/lipase At5g18430">
    <location>
        <begin position="20"/>
        <end position="362"/>
    </location>
</feature>
<feature type="active site" description="Nucleophile" evidence="1">
    <location>
        <position position="35"/>
    </location>
</feature>
<feature type="active site" evidence="1">
    <location>
        <position position="327"/>
    </location>
</feature>
<feature type="active site" evidence="1">
    <location>
        <position position="330"/>
    </location>
</feature>
<feature type="glycosylation site" description="N-linked (GlcNAc...) asparagine" evidence="2">
    <location>
        <position position="117"/>
    </location>
</feature>
<feature type="glycosylation site" description="N-linked (GlcNAc...) asparagine" evidence="2">
    <location>
        <position position="355"/>
    </location>
</feature>
<comment type="subcellular location">
    <subcellularLocation>
        <location evidence="3">Secreted</location>
    </subcellularLocation>
</comment>
<comment type="similarity">
    <text evidence="3">Belongs to the 'GDSL' lipolytic enzyme family.</text>
</comment>
<name>GDL77_ARATH</name>
<dbReference type="EC" id="3.1.1.-"/>
<dbReference type="EMBL" id="AC051626">
    <property type="status" value="NOT_ANNOTATED_CDS"/>
    <property type="molecule type" value="Genomic_DNA"/>
</dbReference>
<dbReference type="EMBL" id="CP002688">
    <property type="protein sequence ID" value="AED92562.1"/>
    <property type="molecule type" value="Genomic_DNA"/>
</dbReference>
<dbReference type="EMBL" id="BT020307">
    <property type="protein sequence ID" value="AAV85662.1"/>
    <property type="molecule type" value="mRNA"/>
</dbReference>
<dbReference type="EMBL" id="BT020574">
    <property type="protein sequence ID" value="AAW78593.1"/>
    <property type="molecule type" value="mRNA"/>
</dbReference>
<dbReference type="RefSeq" id="NP_197344.2">
    <property type="nucleotide sequence ID" value="NM_121848.4"/>
</dbReference>
<dbReference type="SMR" id="Q5PNZ0"/>
<dbReference type="FunCoup" id="Q5PNZ0">
    <property type="interactions" value="89"/>
</dbReference>
<dbReference type="STRING" id="3702.Q5PNZ0"/>
<dbReference type="GlyGen" id="Q5PNZ0">
    <property type="glycosylation" value="2 sites"/>
</dbReference>
<dbReference type="PaxDb" id="3702-AT5G18430.1"/>
<dbReference type="ProteomicsDB" id="247108"/>
<dbReference type="EnsemblPlants" id="AT5G18430.1">
    <property type="protein sequence ID" value="AT5G18430.1"/>
    <property type="gene ID" value="AT5G18430"/>
</dbReference>
<dbReference type="GeneID" id="831961"/>
<dbReference type="Gramene" id="AT5G18430.1">
    <property type="protein sequence ID" value="AT5G18430.1"/>
    <property type="gene ID" value="AT5G18430"/>
</dbReference>
<dbReference type="KEGG" id="ath:AT5G18430"/>
<dbReference type="Araport" id="AT5G18430"/>
<dbReference type="TAIR" id="AT5G18430"/>
<dbReference type="eggNOG" id="ENOG502QQP0">
    <property type="taxonomic scope" value="Eukaryota"/>
</dbReference>
<dbReference type="HOGENOM" id="CLU_015101_0_0_1"/>
<dbReference type="InParanoid" id="Q5PNZ0"/>
<dbReference type="OMA" id="NGRCSAE"/>
<dbReference type="PhylomeDB" id="Q5PNZ0"/>
<dbReference type="PRO" id="PR:Q5PNZ0"/>
<dbReference type="Proteomes" id="UP000006548">
    <property type="component" value="Chromosome 5"/>
</dbReference>
<dbReference type="ExpressionAtlas" id="Q5PNZ0">
    <property type="expression patterns" value="baseline and differential"/>
</dbReference>
<dbReference type="GO" id="GO:0005576">
    <property type="term" value="C:extracellular region"/>
    <property type="evidence" value="ECO:0007669"/>
    <property type="project" value="UniProtKB-SubCell"/>
</dbReference>
<dbReference type="GO" id="GO:0016788">
    <property type="term" value="F:hydrolase activity, acting on ester bonds"/>
    <property type="evidence" value="ECO:0007669"/>
    <property type="project" value="InterPro"/>
</dbReference>
<dbReference type="GO" id="GO:0016042">
    <property type="term" value="P:lipid catabolic process"/>
    <property type="evidence" value="ECO:0007669"/>
    <property type="project" value="UniProtKB-KW"/>
</dbReference>
<dbReference type="CDD" id="cd01837">
    <property type="entry name" value="SGNH_plant_lipase_like"/>
    <property type="match status" value="1"/>
</dbReference>
<dbReference type="Gene3D" id="3.40.50.1110">
    <property type="entry name" value="SGNH hydrolase"/>
    <property type="match status" value="1"/>
</dbReference>
<dbReference type="InterPro" id="IPR001087">
    <property type="entry name" value="GDSL"/>
</dbReference>
<dbReference type="InterPro" id="IPR051058">
    <property type="entry name" value="GDSL_Est/Lipase"/>
</dbReference>
<dbReference type="InterPro" id="IPR036514">
    <property type="entry name" value="SGNH_hydro_sf"/>
</dbReference>
<dbReference type="InterPro" id="IPR035669">
    <property type="entry name" value="SGNH_plant_lipase-like"/>
</dbReference>
<dbReference type="PANTHER" id="PTHR45648:SF43">
    <property type="entry name" value="(RAPE) HYPOTHETICAL PROTEIN"/>
    <property type="match status" value="1"/>
</dbReference>
<dbReference type="PANTHER" id="PTHR45648">
    <property type="entry name" value="GDSL LIPASE/ACYLHYDROLASE FAMILY PROTEIN (AFU_ORTHOLOGUE AFUA_4G14700)"/>
    <property type="match status" value="1"/>
</dbReference>
<dbReference type="Pfam" id="PF00657">
    <property type="entry name" value="Lipase_GDSL"/>
    <property type="match status" value="1"/>
</dbReference>
<dbReference type="SUPFAM" id="SSF52266">
    <property type="entry name" value="SGNH hydrolase"/>
    <property type="match status" value="1"/>
</dbReference>